<feature type="chain" id="PRO_1000214659" description="Large ribosomal subunit protein bL25">
    <location>
        <begin position="1"/>
        <end position="224"/>
    </location>
</feature>
<feature type="region of interest" description="Disordered" evidence="2">
    <location>
        <begin position="190"/>
        <end position="224"/>
    </location>
</feature>
<protein>
    <recommendedName>
        <fullName evidence="1">Large ribosomal subunit protein bL25</fullName>
    </recommendedName>
    <alternativeName>
        <fullName evidence="3">50S ribosomal protein L25</fullName>
    </alternativeName>
    <alternativeName>
        <fullName evidence="1">General stress protein CTC</fullName>
    </alternativeName>
</protein>
<name>RL25_VARPS</name>
<sequence>MKFVAFERAKQGTGASRRLRISGKTPGIVYGGEGKPQLIELDHNALWHALKKEAFHSSILEMELGGATSKVLLRDVQYHPFRQLVQHIDFQRVDAKTRMHMKVPLHYKGEEESDAVKLDHNLVTHVMTELEVSCLPADLPEFIEVDLSGLKKNATLHVNDIKLPKGVKFVSHGKLNPVIVSAVPPLVSEEPAPAAEGAAPAEGAAAAAAGGKPAAKTAKPAAKK</sequence>
<reference key="1">
    <citation type="journal article" date="2011" name="J. Bacteriol.">
        <title>Complete genome sequence of the metabolically versatile plant growth-promoting endophyte, Variovorax paradoxus S110.</title>
        <authorList>
            <person name="Han J.I."/>
            <person name="Choi H.K."/>
            <person name="Lee S.W."/>
            <person name="Orwin P.M."/>
            <person name="Kim J."/>
            <person name="Laroe S.L."/>
            <person name="Kim T.G."/>
            <person name="O'Neil J."/>
            <person name="Leadbetter J.R."/>
            <person name="Lee S.Y."/>
            <person name="Hur C.G."/>
            <person name="Spain J.C."/>
            <person name="Ovchinnikova G."/>
            <person name="Goodwin L."/>
            <person name="Han C."/>
        </authorList>
    </citation>
    <scope>NUCLEOTIDE SEQUENCE [LARGE SCALE GENOMIC DNA]</scope>
    <source>
        <strain>S110</strain>
    </source>
</reference>
<gene>
    <name evidence="1" type="primary">rplY</name>
    <name evidence="1" type="synonym">ctc</name>
    <name type="ordered locus">Vapar_4346</name>
</gene>
<evidence type="ECO:0000255" key="1">
    <source>
        <dbReference type="HAMAP-Rule" id="MF_01334"/>
    </source>
</evidence>
<evidence type="ECO:0000256" key="2">
    <source>
        <dbReference type="SAM" id="MobiDB-lite"/>
    </source>
</evidence>
<evidence type="ECO:0000305" key="3"/>
<dbReference type="EMBL" id="CP001635">
    <property type="protein sequence ID" value="ACS20957.1"/>
    <property type="molecule type" value="Genomic_DNA"/>
</dbReference>
<dbReference type="SMR" id="C5CYZ6"/>
<dbReference type="STRING" id="543728.Vapar_4346"/>
<dbReference type="KEGG" id="vap:Vapar_4346"/>
<dbReference type="eggNOG" id="COG1825">
    <property type="taxonomic scope" value="Bacteria"/>
</dbReference>
<dbReference type="HOGENOM" id="CLU_075939_0_1_4"/>
<dbReference type="OrthoDB" id="9806411at2"/>
<dbReference type="GO" id="GO:0022625">
    <property type="term" value="C:cytosolic large ribosomal subunit"/>
    <property type="evidence" value="ECO:0007669"/>
    <property type="project" value="TreeGrafter"/>
</dbReference>
<dbReference type="GO" id="GO:0008097">
    <property type="term" value="F:5S rRNA binding"/>
    <property type="evidence" value="ECO:0007669"/>
    <property type="project" value="InterPro"/>
</dbReference>
<dbReference type="GO" id="GO:0003735">
    <property type="term" value="F:structural constituent of ribosome"/>
    <property type="evidence" value="ECO:0007669"/>
    <property type="project" value="InterPro"/>
</dbReference>
<dbReference type="GO" id="GO:0006412">
    <property type="term" value="P:translation"/>
    <property type="evidence" value="ECO:0007669"/>
    <property type="project" value="UniProtKB-UniRule"/>
</dbReference>
<dbReference type="CDD" id="cd00495">
    <property type="entry name" value="Ribosomal_L25_TL5_CTC"/>
    <property type="match status" value="1"/>
</dbReference>
<dbReference type="Gene3D" id="2.170.120.20">
    <property type="entry name" value="Ribosomal protein L25, beta domain"/>
    <property type="match status" value="1"/>
</dbReference>
<dbReference type="Gene3D" id="2.40.240.10">
    <property type="entry name" value="Ribosomal Protein L25, Chain P"/>
    <property type="match status" value="1"/>
</dbReference>
<dbReference type="HAMAP" id="MF_01334">
    <property type="entry name" value="Ribosomal_bL25_CTC"/>
    <property type="match status" value="1"/>
</dbReference>
<dbReference type="InterPro" id="IPR020056">
    <property type="entry name" value="Rbsml_bL25/Gln-tRNA_synth_N"/>
</dbReference>
<dbReference type="InterPro" id="IPR011035">
    <property type="entry name" value="Ribosomal_bL25/Gln-tRNA_synth"/>
</dbReference>
<dbReference type="InterPro" id="IPR020057">
    <property type="entry name" value="Ribosomal_bL25_b-dom"/>
</dbReference>
<dbReference type="InterPro" id="IPR037121">
    <property type="entry name" value="Ribosomal_bL25_C"/>
</dbReference>
<dbReference type="InterPro" id="IPR001021">
    <property type="entry name" value="Ribosomal_bL25_long"/>
</dbReference>
<dbReference type="InterPro" id="IPR029751">
    <property type="entry name" value="Ribosomal_L25_dom"/>
</dbReference>
<dbReference type="InterPro" id="IPR020930">
    <property type="entry name" value="Ribosomal_uL5_bac-type"/>
</dbReference>
<dbReference type="NCBIfam" id="TIGR00731">
    <property type="entry name" value="bL25_bact_ctc"/>
    <property type="match status" value="1"/>
</dbReference>
<dbReference type="NCBIfam" id="NF004128">
    <property type="entry name" value="PRK05618.1-2"/>
    <property type="match status" value="1"/>
</dbReference>
<dbReference type="NCBIfam" id="NF004130">
    <property type="entry name" value="PRK05618.1-5"/>
    <property type="match status" value="1"/>
</dbReference>
<dbReference type="NCBIfam" id="NF004612">
    <property type="entry name" value="PRK05943.1"/>
    <property type="match status" value="1"/>
</dbReference>
<dbReference type="PANTHER" id="PTHR33284">
    <property type="entry name" value="RIBOSOMAL PROTEIN L25/GLN-TRNA SYNTHETASE, ANTI-CODON-BINDING DOMAIN-CONTAINING PROTEIN"/>
    <property type="match status" value="1"/>
</dbReference>
<dbReference type="PANTHER" id="PTHR33284:SF1">
    <property type="entry name" value="RIBOSOMAL PROTEIN L25_GLN-TRNA SYNTHETASE, ANTI-CODON-BINDING DOMAIN-CONTAINING PROTEIN"/>
    <property type="match status" value="1"/>
</dbReference>
<dbReference type="Pfam" id="PF01386">
    <property type="entry name" value="Ribosomal_L25p"/>
    <property type="match status" value="1"/>
</dbReference>
<dbReference type="Pfam" id="PF14693">
    <property type="entry name" value="Ribosomal_TL5_C"/>
    <property type="match status" value="1"/>
</dbReference>
<dbReference type="SUPFAM" id="SSF50715">
    <property type="entry name" value="Ribosomal protein L25-like"/>
    <property type="match status" value="1"/>
</dbReference>
<accession>C5CYZ6</accession>
<keyword id="KW-0687">Ribonucleoprotein</keyword>
<keyword id="KW-0689">Ribosomal protein</keyword>
<keyword id="KW-0694">RNA-binding</keyword>
<keyword id="KW-0699">rRNA-binding</keyword>
<comment type="function">
    <text evidence="1">This is one of the proteins that binds to the 5S RNA in the ribosome where it forms part of the central protuberance.</text>
</comment>
<comment type="subunit">
    <text evidence="1">Part of the 50S ribosomal subunit; part of the 5S rRNA/L5/L18/L25 subcomplex. Contacts the 5S rRNA. Binds to the 5S rRNA independently of L5 and L18.</text>
</comment>
<comment type="similarity">
    <text evidence="1">Belongs to the bacterial ribosomal protein bL25 family. CTC subfamily.</text>
</comment>
<proteinExistence type="inferred from homology"/>
<organism>
    <name type="scientific">Variovorax paradoxus (strain S110)</name>
    <dbReference type="NCBI Taxonomy" id="543728"/>
    <lineage>
        <taxon>Bacteria</taxon>
        <taxon>Pseudomonadati</taxon>
        <taxon>Pseudomonadota</taxon>
        <taxon>Betaproteobacteria</taxon>
        <taxon>Burkholderiales</taxon>
        <taxon>Comamonadaceae</taxon>
        <taxon>Variovorax</taxon>
    </lineage>
</organism>